<sequence length="68" mass="7318">MSGSSSVAAMKKVVQQLRLEAGLNRVKVSQAAADLKQFCLQNAQHDPLLTGVSSSTNPFRPQKVCSFL</sequence>
<evidence type="ECO:0000250" key="1"/>
<evidence type="ECO:0000250" key="2">
    <source>
        <dbReference type="UniProtKB" id="P63218"/>
    </source>
</evidence>
<evidence type="ECO:0000305" key="3"/>
<comment type="function">
    <text>Guanine nucleotide-binding proteins (G proteins) are involved as a modulator or transducer in various transmembrane signaling systems. The beta and gamma chains are required for the GTPase activity, for replacement of GDP by GTP, and for G protein-effector interaction.</text>
</comment>
<comment type="subunit">
    <text>G proteins are composed of 3 units, alpha, beta and gamma.</text>
</comment>
<comment type="subcellular location">
    <subcellularLocation>
        <location evidence="3">Cell membrane</location>
        <topology evidence="3">Lipid-anchor</topology>
        <orientation evidence="3">Cytoplasmic side</orientation>
    </subcellularLocation>
</comment>
<comment type="tissue specificity">
    <text>Expressed in a variety of tissues.</text>
</comment>
<comment type="similarity">
    <text evidence="3">Belongs to the G protein gamma family.</text>
</comment>
<accession>P63217</accession>
<accession>P30670</accession>
<accession>Q3ZCC0</accession>
<accession>Q61015</accession>
<dbReference type="EMBL" id="M95779">
    <property type="protein sequence ID" value="AAA30535.1"/>
    <property type="molecule type" value="mRNA"/>
</dbReference>
<dbReference type="EMBL" id="BC102572">
    <property type="protein sequence ID" value="AAI02573.1"/>
    <property type="molecule type" value="mRNA"/>
</dbReference>
<dbReference type="PIR" id="B42243">
    <property type="entry name" value="B42243"/>
</dbReference>
<dbReference type="RefSeq" id="NP_777236.1">
    <property type="nucleotide sequence ID" value="NM_174811.4"/>
</dbReference>
<dbReference type="SMR" id="P63217"/>
<dbReference type="DIP" id="DIP-324N"/>
<dbReference type="FunCoup" id="P63217">
    <property type="interactions" value="1460"/>
</dbReference>
<dbReference type="STRING" id="9913.ENSBTAP00000010682"/>
<dbReference type="PaxDb" id="9913-ENSBTAP00000010682"/>
<dbReference type="Ensembl" id="ENSBTAT00000010682.3">
    <property type="protein sequence ID" value="ENSBTAP00000010682.2"/>
    <property type="gene ID" value="ENSBTAG00000008122.3"/>
</dbReference>
<dbReference type="GeneID" id="287018"/>
<dbReference type="KEGG" id="bta:287018"/>
<dbReference type="CTD" id="2787"/>
<dbReference type="VEuPathDB" id="HostDB:ENSBTAG00000008122"/>
<dbReference type="eggNOG" id="KOG4119">
    <property type="taxonomic scope" value="Eukaryota"/>
</dbReference>
<dbReference type="GeneTree" id="ENSGT01100000263525"/>
<dbReference type="HOGENOM" id="CLU_168377_3_0_1"/>
<dbReference type="InParanoid" id="P63217"/>
<dbReference type="OMA" id="QNALHDP"/>
<dbReference type="OrthoDB" id="6264244at2759"/>
<dbReference type="TreeFam" id="TF319909"/>
<dbReference type="Reactome" id="R-BTA-1296041">
    <property type="pathway name" value="Activation of G protein gated Potassium channels"/>
</dbReference>
<dbReference type="Reactome" id="R-BTA-202040">
    <property type="pathway name" value="G-protein activation"/>
</dbReference>
<dbReference type="Reactome" id="R-BTA-381676">
    <property type="pathway name" value="Glucagon-like Peptide-1 (GLP1) regulates insulin secretion"/>
</dbReference>
<dbReference type="Reactome" id="R-BTA-392170">
    <property type="pathway name" value="ADP signalling through P2Y purinoceptor 12"/>
</dbReference>
<dbReference type="Reactome" id="R-BTA-392451">
    <property type="pathway name" value="G beta:gamma signalling through PI3Kgamma"/>
</dbReference>
<dbReference type="Reactome" id="R-BTA-392851">
    <property type="pathway name" value="Prostacyclin signalling through prostacyclin receptor"/>
</dbReference>
<dbReference type="Reactome" id="R-BTA-400042">
    <property type="pathway name" value="Adrenaline,noradrenaline inhibits insulin secretion"/>
</dbReference>
<dbReference type="Reactome" id="R-BTA-4086398">
    <property type="pathway name" value="Ca2+ pathway"/>
</dbReference>
<dbReference type="Reactome" id="R-BTA-416476">
    <property type="pathway name" value="G alpha (q) signalling events"/>
</dbReference>
<dbReference type="Reactome" id="R-BTA-416482">
    <property type="pathway name" value="G alpha (12/13) signalling events"/>
</dbReference>
<dbReference type="Reactome" id="R-BTA-418217">
    <property type="pathway name" value="G beta:gamma signalling through PLC beta"/>
</dbReference>
<dbReference type="Reactome" id="R-BTA-418555">
    <property type="pathway name" value="G alpha (s) signalling events"/>
</dbReference>
<dbReference type="Reactome" id="R-BTA-418592">
    <property type="pathway name" value="ADP signalling through P2Y purinoceptor 1"/>
</dbReference>
<dbReference type="Reactome" id="R-BTA-418594">
    <property type="pathway name" value="G alpha (i) signalling events"/>
</dbReference>
<dbReference type="Reactome" id="R-BTA-418597">
    <property type="pathway name" value="G alpha (z) signalling events"/>
</dbReference>
<dbReference type="Reactome" id="R-BTA-420092">
    <property type="pathway name" value="Glucagon-type ligand receptors"/>
</dbReference>
<dbReference type="Reactome" id="R-BTA-428930">
    <property type="pathway name" value="Thromboxane signalling through TP receptor"/>
</dbReference>
<dbReference type="Reactome" id="R-BTA-432040">
    <property type="pathway name" value="Vasopressin regulates renal water homeostasis via Aquaporins"/>
</dbReference>
<dbReference type="Reactome" id="R-BTA-456926">
    <property type="pathway name" value="Thrombin signalling through proteinase activated receptors (PARs)"/>
</dbReference>
<dbReference type="Reactome" id="R-BTA-500657">
    <property type="pathway name" value="Presynaptic function of Kainate receptors"/>
</dbReference>
<dbReference type="Reactome" id="R-BTA-6814122">
    <property type="pathway name" value="Cooperation of PDCL (PhLP1) and TRiC/CCT in G-protein beta folding"/>
</dbReference>
<dbReference type="Reactome" id="R-BTA-8964315">
    <property type="pathway name" value="G beta:gamma signalling through BTK"/>
</dbReference>
<dbReference type="Reactome" id="R-BTA-8964616">
    <property type="pathway name" value="G beta:gamma signalling through CDC42"/>
</dbReference>
<dbReference type="Reactome" id="R-BTA-9009391">
    <property type="pathway name" value="Extra-nuclear estrogen signaling"/>
</dbReference>
<dbReference type="Reactome" id="R-BTA-9856530">
    <property type="pathway name" value="High laminar flow shear stress activates signaling by PIEZO1 and PECAM1:CDH5:KDR in endothelial cells"/>
</dbReference>
<dbReference type="Reactome" id="R-BTA-997272">
    <property type="pathway name" value="Inhibition of voltage gated Ca2+ channels via Gbeta/gamma subunits"/>
</dbReference>
<dbReference type="Proteomes" id="UP000009136">
    <property type="component" value="Chromosome 3"/>
</dbReference>
<dbReference type="Bgee" id="ENSBTAG00000008122">
    <property type="expression patterns" value="Expressed in thyroid gland and 104 other cell types or tissues"/>
</dbReference>
<dbReference type="GO" id="GO:0005834">
    <property type="term" value="C:heterotrimeric G-protein complex"/>
    <property type="evidence" value="ECO:0000318"/>
    <property type="project" value="GO_Central"/>
</dbReference>
<dbReference type="GO" id="GO:0031681">
    <property type="term" value="F:G-protein beta-subunit binding"/>
    <property type="evidence" value="ECO:0000318"/>
    <property type="project" value="GO_Central"/>
</dbReference>
<dbReference type="GO" id="GO:0007186">
    <property type="term" value="P:G protein-coupled receptor signaling pathway"/>
    <property type="evidence" value="ECO:0000318"/>
    <property type="project" value="GO_Central"/>
</dbReference>
<dbReference type="CDD" id="cd00068">
    <property type="entry name" value="GGL"/>
    <property type="match status" value="1"/>
</dbReference>
<dbReference type="FunFam" id="4.10.260.10:FF:000001">
    <property type="entry name" value="Guanine nucleotide-binding protein subunit gamma"/>
    <property type="match status" value="1"/>
</dbReference>
<dbReference type="Gene3D" id="4.10.260.10">
    <property type="entry name" value="Transducin (heterotrimeric G protein), gamma chain"/>
    <property type="match status" value="1"/>
</dbReference>
<dbReference type="InterPro" id="IPR015898">
    <property type="entry name" value="G-protein_gamma-like_dom"/>
</dbReference>
<dbReference type="InterPro" id="IPR036284">
    <property type="entry name" value="GGL_sf"/>
</dbReference>
<dbReference type="InterPro" id="IPR001770">
    <property type="entry name" value="Gprotein-gamma"/>
</dbReference>
<dbReference type="PANTHER" id="PTHR13809">
    <property type="entry name" value="GUANINE NUCLEOTIDE-BINDING PROTEIN GAMMA SUBUNIT"/>
    <property type="match status" value="1"/>
</dbReference>
<dbReference type="Pfam" id="PF00631">
    <property type="entry name" value="G-gamma"/>
    <property type="match status" value="1"/>
</dbReference>
<dbReference type="PRINTS" id="PR00321">
    <property type="entry name" value="GPROTEING"/>
</dbReference>
<dbReference type="SMART" id="SM01224">
    <property type="entry name" value="G_gamma"/>
    <property type="match status" value="1"/>
</dbReference>
<dbReference type="SMART" id="SM00224">
    <property type="entry name" value="GGL"/>
    <property type="match status" value="1"/>
</dbReference>
<dbReference type="SUPFAM" id="SSF48670">
    <property type="entry name" value="Transducin (heterotrimeric G protein), gamma chain"/>
    <property type="match status" value="1"/>
</dbReference>
<dbReference type="PROSITE" id="PS50058">
    <property type="entry name" value="G_PROTEIN_GAMMA"/>
    <property type="match status" value="1"/>
</dbReference>
<proteinExistence type="evidence at protein level"/>
<protein>
    <recommendedName>
        <fullName>Guanine nucleotide-binding protein G(I)/G(S)/G(O) subunit gamma-5</fullName>
    </recommendedName>
</protein>
<keyword id="KW-0007">Acetylation</keyword>
<keyword id="KW-1003">Cell membrane</keyword>
<keyword id="KW-0903">Direct protein sequencing</keyword>
<keyword id="KW-0449">Lipoprotein</keyword>
<keyword id="KW-0472">Membrane</keyword>
<keyword id="KW-0488">Methylation</keyword>
<keyword id="KW-0597">Phosphoprotein</keyword>
<keyword id="KW-0636">Prenylation</keyword>
<keyword id="KW-1185">Reference proteome</keyword>
<keyword id="KW-0807">Transducer</keyword>
<name>GBG5_BOVIN</name>
<gene>
    <name type="primary">GNG5</name>
    <name type="synonym">GNGT5</name>
</gene>
<feature type="initiator methionine" description="Removed" evidence="2">
    <location>
        <position position="1"/>
    </location>
</feature>
<feature type="chain" id="PRO_0000012625" description="Guanine nucleotide-binding protein G(I)/G(S)/G(O) subunit gamma-5">
    <location>
        <begin position="2"/>
        <end position="65"/>
    </location>
</feature>
<feature type="propeptide" id="PRO_0000012626" description="Removed in mature form" evidence="1">
    <location>
        <begin position="66"/>
        <end position="68"/>
    </location>
</feature>
<feature type="modified residue" description="N-acetylserine" evidence="2">
    <location>
        <position position="2"/>
    </location>
</feature>
<feature type="modified residue" description="Phosphoserine" evidence="2">
    <location>
        <position position="2"/>
    </location>
</feature>
<feature type="modified residue" description="Cysteine methyl ester" evidence="1">
    <location>
        <position position="65"/>
    </location>
</feature>
<feature type="lipid moiety-binding region" description="S-geranylgeranyl cysteine" evidence="1">
    <location>
        <position position="65"/>
    </location>
</feature>
<organism>
    <name type="scientific">Bos taurus</name>
    <name type="common">Bovine</name>
    <dbReference type="NCBI Taxonomy" id="9913"/>
    <lineage>
        <taxon>Eukaryota</taxon>
        <taxon>Metazoa</taxon>
        <taxon>Chordata</taxon>
        <taxon>Craniata</taxon>
        <taxon>Vertebrata</taxon>
        <taxon>Euteleostomi</taxon>
        <taxon>Mammalia</taxon>
        <taxon>Eutheria</taxon>
        <taxon>Laurasiatheria</taxon>
        <taxon>Artiodactyla</taxon>
        <taxon>Ruminantia</taxon>
        <taxon>Pecora</taxon>
        <taxon>Bovidae</taxon>
        <taxon>Bovinae</taxon>
        <taxon>Bos</taxon>
    </lineage>
</organism>
<reference key="1">
    <citation type="journal article" date="1992" name="Mol. Cell. Biol.">
        <title>Characterization of the cDNA and genomic sequence of a G protein gamma subunit (gamma 5).</title>
        <authorList>
            <person name="Fisher K.J."/>
            <person name="Aronson N.N. Jr."/>
        </authorList>
    </citation>
    <scope>NUCLEOTIDE SEQUENCE [MRNA]</scope>
    <source>
        <tissue>Liver</tissue>
    </source>
</reference>
<reference key="2">
    <citation type="journal article" date="1993" name="Biochem. Biophys. Res. Commun.">
        <title>Identification of three forms of the gamma subunit of G proteins isolated from bovine spleen.</title>
        <authorList>
            <person name="Morishita R."/>
            <person name="Masuda K."/>
            <person name="Niwa M."/>
            <person name="Kato K."/>
            <person name="Asano T."/>
        </authorList>
    </citation>
    <scope>PROTEIN SEQUENCE</scope>
    <source>
        <tissue>Spleen</tissue>
    </source>
</reference>
<reference key="3">
    <citation type="submission" date="2005-08" db="EMBL/GenBank/DDBJ databases">
        <authorList>
            <consortium name="NIH - Mammalian Gene Collection (MGC) project"/>
        </authorList>
    </citation>
    <scope>NUCLEOTIDE SEQUENCE [LARGE SCALE MRNA]</scope>
    <source>
        <strain>Crossbred X Angus</strain>
        <tissue>Ileum</tissue>
    </source>
</reference>